<sequence>MNGKLLLVSLMVTMLVMQPAEAGVWDWLKKTAKNVWNSDIVKQLKGKAINAAKNYVAEKIGATPSVAGQIPFDEFMDILHYRP</sequence>
<evidence type="ECO:0000255" key="1"/>
<evidence type="ECO:0000269" key="2">
    <source>
    </source>
</evidence>
<evidence type="ECO:0000303" key="3">
    <source>
    </source>
</evidence>
<evidence type="ECO:0000305" key="4"/>
<evidence type="ECO:0000305" key="5">
    <source>
    </source>
</evidence>
<proteinExistence type="inferred from homology"/>
<organism>
    <name type="scientific">Heterometrus spinifer</name>
    <name type="common">Asia giant forest scorpion</name>
    <name type="synonym">Malaysian black scorpion</name>
    <dbReference type="NCBI Taxonomy" id="118530"/>
    <lineage>
        <taxon>Eukaryota</taxon>
        <taxon>Metazoa</taxon>
        <taxon>Ecdysozoa</taxon>
        <taxon>Arthropoda</taxon>
        <taxon>Chelicerata</taxon>
        <taxon>Arachnida</taxon>
        <taxon>Scorpiones</taxon>
        <taxon>Iurida</taxon>
        <taxon>Scorpionoidea</taxon>
        <taxon>Scorpionidae</taxon>
        <taxon>Heterometrinae</taxon>
        <taxon>Heterometrus</taxon>
    </lineage>
</organism>
<comment type="function">
    <text evidence="2">Amphipathic peptide with potent activities against both Gram-positive and Gram-negative bacteria. Is the most active against the two Gram-positive Bacillus megaterium and Micrococcus luteus (MIC=4.0 uM for both). It has relatively low hemolytic activity against human erythrocytes.</text>
</comment>
<comment type="subcellular location">
    <subcellularLocation>
        <location evidence="5">Secreted</location>
    </subcellularLocation>
    <subcellularLocation>
        <location evidence="5">Target cell membrane</location>
    </subcellularLocation>
</comment>
<comment type="tissue specificity">
    <text evidence="5">Expressed by the venom gland.</text>
</comment>
<comment type="similarity">
    <text evidence="4">Belongs to the non-disulfide-bridged peptide (NDBP) superfamily. Long chain multifunctional peptide (group 2) family.</text>
</comment>
<feature type="signal peptide" evidence="1">
    <location>
        <begin position="1"/>
        <end position="22"/>
    </location>
</feature>
<feature type="chain" id="PRO_5007393300" description="Heterin-1" evidence="5">
    <location>
        <begin position="23"/>
        <end position="65"/>
    </location>
</feature>
<feature type="propeptide" id="PRO_0000454583" evidence="5">
    <location>
        <begin position="66"/>
        <end position="83"/>
    </location>
</feature>
<keyword id="KW-0044">Antibiotic</keyword>
<keyword id="KW-0929">Antimicrobial</keyword>
<keyword id="KW-0295">Fungicide</keyword>
<keyword id="KW-0406">Ion transport</keyword>
<keyword id="KW-0472">Membrane</keyword>
<keyword id="KW-0964">Secreted</keyword>
<keyword id="KW-0732">Signal</keyword>
<keyword id="KW-1052">Target cell membrane</keyword>
<keyword id="KW-1053">Target membrane</keyword>
<keyword id="KW-0812">Transmembrane</keyword>
<keyword id="KW-0813">Transport</keyword>
<dbReference type="EMBL" id="KC538867">
    <property type="protein sequence ID" value="AGK88593.1"/>
    <property type="molecule type" value="mRNA"/>
</dbReference>
<dbReference type="EMBL" id="KC538868">
    <property type="protein sequence ID" value="AGK88594.1"/>
    <property type="molecule type" value="Genomic_DNA"/>
</dbReference>
<dbReference type="GO" id="GO:0005576">
    <property type="term" value="C:extracellular region"/>
    <property type="evidence" value="ECO:0007669"/>
    <property type="project" value="UniProtKB-SubCell"/>
</dbReference>
<dbReference type="GO" id="GO:0016020">
    <property type="term" value="C:membrane"/>
    <property type="evidence" value="ECO:0007669"/>
    <property type="project" value="UniProtKB-KW"/>
</dbReference>
<dbReference type="GO" id="GO:0044218">
    <property type="term" value="C:other organism cell membrane"/>
    <property type="evidence" value="ECO:0007669"/>
    <property type="project" value="UniProtKB-KW"/>
</dbReference>
<dbReference type="GO" id="GO:0042742">
    <property type="term" value="P:defense response to bacterium"/>
    <property type="evidence" value="ECO:0007669"/>
    <property type="project" value="UniProtKB-KW"/>
</dbReference>
<dbReference type="GO" id="GO:0050832">
    <property type="term" value="P:defense response to fungus"/>
    <property type="evidence" value="ECO:0007669"/>
    <property type="project" value="UniProtKB-KW"/>
</dbReference>
<dbReference type="GO" id="GO:0044179">
    <property type="term" value="P:hemolysis in another organism"/>
    <property type="evidence" value="ECO:0007669"/>
    <property type="project" value="InterPro"/>
</dbReference>
<dbReference type="GO" id="GO:0006811">
    <property type="term" value="P:monoatomic ion transport"/>
    <property type="evidence" value="ECO:0007669"/>
    <property type="project" value="UniProtKB-KW"/>
</dbReference>
<dbReference type="InterPro" id="IPR012526">
    <property type="entry name" value="Antimicrobial_7"/>
</dbReference>
<dbReference type="Pfam" id="PF08102">
    <property type="entry name" value="Antimicrobial_7"/>
    <property type="match status" value="1"/>
</dbReference>
<reference key="1">
    <citation type="journal article" date="2014" name="Peptides">
        <title>Genomic and functional characterization of three new venom peptides from the scorpion Heterometrus spinifer.</title>
        <authorList>
            <person name="Wu S."/>
            <person name="Nie Y."/>
            <person name="Zeng X.C."/>
            <person name="Cao H."/>
            <person name="Zhang L."/>
            <person name="Zhou L."/>
            <person name="Yang Y."/>
            <person name="Luo X."/>
            <person name="Liu Y."/>
        </authorList>
    </citation>
    <scope>NUCLEOTIDE SEQUENCE [GENOMIC DNA / MRNA]</scope>
    <scope>FUNCTION</scope>
    <scope>SYNTHESIS OF 23-65</scope>
</reference>
<protein>
    <recommendedName>
        <fullName evidence="3">Heterin-1</fullName>
    </recommendedName>
</protein>
<accession>A0A0C4G489</accession>
<name>NDB2_HETSP</name>